<gene>
    <name evidence="1" type="primary">pnp</name>
    <name type="ordered locus">SPG_0536</name>
</gene>
<accession>B5E2A0</accession>
<comment type="function">
    <text evidence="1">Involved in mRNA degradation. Catalyzes the phosphorolysis of single-stranded polyribonucleotides processively in the 3'- to 5'-direction.</text>
</comment>
<comment type="catalytic activity">
    <reaction evidence="1">
        <text>RNA(n+1) + phosphate = RNA(n) + a ribonucleoside 5'-diphosphate</text>
        <dbReference type="Rhea" id="RHEA:22096"/>
        <dbReference type="Rhea" id="RHEA-COMP:14527"/>
        <dbReference type="Rhea" id="RHEA-COMP:17342"/>
        <dbReference type="ChEBI" id="CHEBI:43474"/>
        <dbReference type="ChEBI" id="CHEBI:57930"/>
        <dbReference type="ChEBI" id="CHEBI:140395"/>
        <dbReference type="EC" id="2.7.7.8"/>
    </reaction>
</comment>
<comment type="cofactor">
    <cofactor evidence="1">
        <name>Mg(2+)</name>
        <dbReference type="ChEBI" id="CHEBI:18420"/>
    </cofactor>
</comment>
<comment type="subcellular location">
    <subcellularLocation>
        <location evidence="1">Cytoplasm</location>
    </subcellularLocation>
</comment>
<comment type="similarity">
    <text evidence="1">Belongs to the polyribonucleotide nucleotidyltransferase family.</text>
</comment>
<dbReference type="EC" id="2.7.7.8" evidence="1"/>
<dbReference type="EMBL" id="CP001015">
    <property type="protein sequence ID" value="ACF56579.1"/>
    <property type="molecule type" value="Genomic_DNA"/>
</dbReference>
<dbReference type="SMR" id="B5E2A0"/>
<dbReference type="KEGG" id="spx:SPG_0536"/>
<dbReference type="HOGENOM" id="CLU_004217_2_2_9"/>
<dbReference type="GO" id="GO:0005829">
    <property type="term" value="C:cytosol"/>
    <property type="evidence" value="ECO:0007669"/>
    <property type="project" value="TreeGrafter"/>
</dbReference>
<dbReference type="GO" id="GO:0000175">
    <property type="term" value="F:3'-5'-RNA exonuclease activity"/>
    <property type="evidence" value="ECO:0007669"/>
    <property type="project" value="TreeGrafter"/>
</dbReference>
<dbReference type="GO" id="GO:0000287">
    <property type="term" value="F:magnesium ion binding"/>
    <property type="evidence" value="ECO:0007669"/>
    <property type="project" value="UniProtKB-UniRule"/>
</dbReference>
<dbReference type="GO" id="GO:0004654">
    <property type="term" value="F:polyribonucleotide nucleotidyltransferase activity"/>
    <property type="evidence" value="ECO:0007669"/>
    <property type="project" value="UniProtKB-UniRule"/>
</dbReference>
<dbReference type="GO" id="GO:0003723">
    <property type="term" value="F:RNA binding"/>
    <property type="evidence" value="ECO:0007669"/>
    <property type="project" value="UniProtKB-UniRule"/>
</dbReference>
<dbReference type="GO" id="GO:0006402">
    <property type="term" value="P:mRNA catabolic process"/>
    <property type="evidence" value="ECO:0007669"/>
    <property type="project" value="UniProtKB-UniRule"/>
</dbReference>
<dbReference type="GO" id="GO:0006396">
    <property type="term" value="P:RNA processing"/>
    <property type="evidence" value="ECO:0007669"/>
    <property type="project" value="InterPro"/>
</dbReference>
<dbReference type="CDD" id="cd02393">
    <property type="entry name" value="KH-I_PNPase"/>
    <property type="match status" value="1"/>
</dbReference>
<dbReference type="CDD" id="cd11363">
    <property type="entry name" value="RNase_PH_PNPase_1"/>
    <property type="match status" value="1"/>
</dbReference>
<dbReference type="CDD" id="cd11364">
    <property type="entry name" value="RNase_PH_PNPase_2"/>
    <property type="match status" value="1"/>
</dbReference>
<dbReference type="FunFam" id="2.40.50.140:FF:000023">
    <property type="entry name" value="Polyribonucleotide nucleotidyltransferase"/>
    <property type="match status" value="1"/>
</dbReference>
<dbReference type="FunFam" id="3.30.1370.10:FF:000001">
    <property type="entry name" value="Polyribonucleotide nucleotidyltransferase"/>
    <property type="match status" value="1"/>
</dbReference>
<dbReference type="FunFam" id="3.30.230.70:FF:000001">
    <property type="entry name" value="Polyribonucleotide nucleotidyltransferase"/>
    <property type="match status" value="1"/>
</dbReference>
<dbReference type="FunFam" id="3.30.230.70:FF:000002">
    <property type="entry name" value="Polyribonucleotide nucleotidyltransferase"/>
    <property type="match status" value="1"/>
</dbReference>
<dbReference type="Gene3D" id="3.30.230.70">
    <property type="entry name" value="GHMP Kinase, N-terminal domain"/>
    <property type="match status" value="2"/>
</dbReference>
<dbReference type="Gene3D" id="3.30.1370.10">
    <property type="entry name" value="K Homology domain, type 1"/>
    <property type="match status" value="1"/>
</dbReference>
<dbReference type="Gene3D" id="2.40.50.140">
    <property type="entry name" value="Nucleic acid-binding proteins"/>
    <property type="match status" value="1"/>
</dbReference>
<dbReference type="HAMAP" id="MF_01595">
    <property type="entry name" value="PNPase"/>
    <property type="match status" value="1"/>
</dbReference>
<dbReference type="InterPro" id="IPR001247">
    <property type="entry name" value="ExoRNase_PH_dom1"/>
</dbReference>
<dbReference type="InterPro" id="IPR015847">
    <property type="entry name" value="ExoRNase_PH_dom2"/>
</dbReference>
<dbReference type="InterPro" id="IPR036345">
    <property type="entry name" value="ExoRNase_PH_dom2_sf"/>
</dbReference>
<dbReference type="InterPro" id="IPR004087">
    <property type="entry name" value="KH_dom"/>
</dbReference>
<dbReference type="InterPro" id="IPR004088">
    <property type="entry name" value="KH_dom_type_1"/>
</dbReference>
<dbReference type="InterPro" id="IPR036612">
    <property type="entry name" value="KH_dom_type_1_sf"/>
</dbReference>
<dbReference type="InterPro" id="IPR012340">
    <property type="entry name" value="NA-bd_OB-fold"/>
</dbReference>
<dbReference type="InterPro" id="IPR012162">
    <property type="entry name" value="PNPase"/>
</dbReference>
<dbReference type="InterPro" id="IPR027408">
    <property type="entry name" value="PNPase/RNase_PH_dom_sf"/>
</dbReference>
<dbReference type="InterPro" id="IPR015848">
    <property type="entry name" value="PNPase_PH_RNA-bd_bac/org-type"/>
</dbReference>
<dbReference type="InterPro" id="IPR036456">
    <property type="entry name" value="PNPase_PH_RNA-bd_sf"/>
</dbReference>
<dbReference type="InterPro" id="IPR020568">
    <property type="entry name" value="Ribosomal_Su5_D2-typ_SF"/>
</dbReference>
<dbReference type="InterPro" id="IPR003029">
    <property type="entry name" value="S1_domain"/>
</dbReference>
<dbReference type="NCBIfam" id="TIGR03591">
    <property type="entry name" value="polynuc_phos"/>
    <property type="match status" value="1"/>
</dbReference>
<dbReference type="NCBIfam" id="NF008805">
    <property type="entry name" value="PRK11824.1"/>
    <property type="match status" value="1"/>
</dbReference>
<dbReference type="PANTHER" id="PTHR11252">
    <property type="entry name" value="POLYRIBONUCLEOTIDE NUCLEOTIDYLTRANSFERASE"/>
    <property type="match status" value="1"/>
</dbReference>
<dbReference type="PANTHER" id="PTHR11252:SF0">
    <property type="entry name" value="POLYRIBONUCLEOTIDE NUCLEOTIDYLTRANSFERASE 1, MITOCHONDRIAL"/>
    <property type="match status" value="1"/>
</dbReference>
<dbReference type="Pfam" id="PF00013">
    <property type="entry name" value="KH_1"/>
    <property type="match status" value="1"/>
</dbReference>
<dbReference type="Pfam" id="PF03726">
    <property type="entry name" value="PNPase"/>
    <property type="match status" value="1"/>
</dbReference>
<dbReference type="Pfam" id="PF01138">
    <property type="entry name" value="RNase_PH"/>
    <property type="match status" value="2"/>
</dbReference>
<dbReference type="Pfam" id="PF03725">
    <property type="entry name" value="RNase_PH_C"/>
    <property type="match status" value="2"/>
</dbReference>
<dbReference type="Pfam" id="PF00575">
    <property type="entry name" value="S1"/>
    <property type="match status" value="1"/>
</dbReference>
<dbReference type="PIRSF" id="PIRSF005499">
    <property type="entry name" value="PNPase"/>
    <property type="match status" value="1"/>
</dbReference>
<dbReference type="SMART" id="SM00322">
    <property type="entry name" value="KH"/>
    <property type="match status" value="1"/>
</dbReference>
<dbReference type="SMART" id="SM00316">
    <property type="entry name" value="S1"/>
    <property type="match status" value="1"/>
</dbReference>
<dbReference type="SUPFAM" id="SSF54791">
    <property type="entry name" value="Eukaryotic type KH-domain (KH-domain type I)"/>
    <property type="match status" value="1"/>
</dbReference>
<dbReference type="SUPFAM" id="SSF50249">
    <property type="entry name" value="Nucleic acid-binding proteins"/>
    <property type="match status" value="1"/>
</dbReference>
<dbReference type="SUPFAM" id="SSF46915">
    <property type="entry name" value="Polynucleotide phosphorylase/guanosine pentaphosphate synthase (PNPase/GPSI), domain 3"/>
    <property type="match status" value="1"/>
</dbReference>
<dbReference type="SUPFAM" id="SSF55666">
    <property type="entry name" value="Ribonuclease PH domain 2-like"/>
    <property type="match status" value="2"/>
</dbReference>
<dbReference type="SUPFAM" id="SSF54211">
    <property type="entry name" value="Ribosomal protein S5 domain 2-like"/>
    <property type="match status" value="2"/>
</dbReference>
<dbReference type="PROSITE" id="PS50084">
    <property type="entry name" value="KH_TYPE_1"/>
    <property type="match status" value="1"/>
</dbReference>
<dbReference type="PROSITE" id="PS50126">
    <property type="entry name" value="S1"/>
    <property type="match status" value="1"/>
</dbReference>
<name>PNP_STRP4</name>
<sequence>MAKQVFQTTFAGRELIVETGQVAKQANGSVVVRYGESTVLTAAVMSKKMATGDFFPLQVNYEEKMYAAGKFPGGFMKREGRPSTDATLTARLIDRPIRPMFAEGFRNEVQVINTVLSYDENASAPMAAMFGSSLALSISDIPFDGPIAGVQVGYVDGQIIINPSQEQAEQSLLELTVAGTKHAINMVESGAKELSEEIMLEALLKGHEAVKELIAFQEEIVAAVGKEKAEVELLHVDAELQAEIIAAYNSDLQKAVQVEEKLAREAATQVVKDQVTAVYEEKYADHEEFDRIMRDVAEILEQMEHAEVRRLITEDKVRPDGRKVDEIRPLDAVVDFLPRVHGSGLFTRGQTQALSVLTLAPMGETQIIDGLDPEYKKRFMHHYNFPQYSVGETGRYGAPGRREIGHGALGERALAQVLPSLEEFPYAIRLVAEVLESNGSSSQASICAGTLALMAGGVPIKAPVAGIAMGLISDGNNYTVLTDIQGLEDHFGDMDFKVAGTRDGITALQMDIKIQGITAEILTEALAQAKKARFEILDVIEATIPEVRLELAPTAPKIDTIKIDVDKIKIVIGKGGETIDKIIAETGVKIDIDEEGNVSIYSSDQDAINRAKEIIAGLVREAKVDEVYRAKVVRIEKFGAFVNLFDKTDALVHISEMAWTRTNRVEDLVEIGDEVDVKVIKIDEKGRIDASMKALLPRPPKPEHDEKGEKSERPHRPRHHKDHKPKKEFTETPKDSE</sequence>
<proteinExistence type="inferred from homology"/>
<reference key="1">
    <citation type="journal article" date="2001" name="Microb. Drug Resist.">
        <title>Annotated draft genomic sequence from a Streptococcus pneumoniae type 19F clinical isolate.</title>
        <authorList>
            <person name="Dopazo J."/>
            <person name="Mendoza A."/>
            <person name="Herrero J."/>
            <person name="Caldara F."/>
            <person name="Humbert Y."/>
            <person name="Friedli L."/>
            <person name="Guerrier M."/>
            <person name="Grand-Schenk E."/>
            <person name="Gandin C."/>
            <person name="de Francesco M."/>
            <person name="Polissi A."/>
            <person name="Buell G."/>
            <person name="Feger G."/>
            <person name="Garcia E."/>
            <person name="Peitsch M."/>
            <person name="Garcia-Bustos J.F."/>
        </authorList>
    </citation>
    <scope>NUCLEOTIDE SEQUENCE [LARGE SCALE GENOMIC DNA]</scope>
    <source>
        <strain>G54</strain>
    </source>
</reference>
<reference key="2">
    <citation type="submission" date="2008-03" db="EMBL/GenBank/DDBJ databases">
        <title>Pneumococcal beta glucoside metabolism investigated by whole genome comparison.</title>
        <authorList>
            <person name="Mulas L."/>
            <person name="Trappetti C."/>
            <person name="Hakenbeck R."/>
            <person name="Iannelli F."/>
            <person name="Pozzi G."/>
            <person name="Davidsen T.M."/>
            <person name="Tettelin H."/>
            <person name="Oggioni M."/>
        </authorList>
    </citation>
    <scope>NUCLEOTIDE SEQUENCE [LARGE SCALE GENOMIC DNA]</scope>
    <source>
        <strain>G54</strain>
    </source>
</reference>
<feature type="chain" id="PRO_1000192497" description="Polyribonucleotide nucleotidyltransferase">
    <location>
        <begin position="1"/>
        <end position="737"/>
    </location>
</feature>
<feature type="domain" description="KH" evidence="1">
    <location>
        <begin position="556"/>
        <end position="615"/>
    </location>
</feature>
<feature type="domain" description="S1 motif" evidence="1">
    <location>
        <begin position="625"/>
        <end position="693"/>
    </location>
</feature>
<feature type="region of interest" description="Disordered" evidence="2">
    <location>
        <begin position="691"/>
        <end position="737"/>
    </location>
</feature>
<feature type="compositionally biased region" description="Basic and acidic residues" evidence="2">
    <location>
        <begin position="700"/>
        <end position="714"/>
    </location>
</feature>
<feature type="compositionally biased region" description="Basic residues" evidence="2">
    <location>
        <begin position="715"/>
        <end position="724"/>
    </location>
</feature>
<feature type="compositionally biased region" description="Basic and acidic residues" evidence="2">
    <location>
        <begin position="725"/>
        <end position="737"/>
    </location>
</feature>
<feature type="binding site" evidence="1">
    <location>
        <position position="489"/>
    </location>
    <ligand>
        <name>Mg(2+)</name>
        <dbReference type="ChEBI" id="CHEBI:18420"/>
    </ligand>
</feature>
<feature type="binding site" evidence="1">
    <location>
        <position position="495"/>
    </location>
    <ligand>
        <name>Mg(2+)</name>
        <dbReference type="ChEBI" id="CHEBI:18420"/>
    </ligand>
</feature>
<protein>
    <recommendedName>
        <fullName evidence="1">Polyribonucleotide nucleotidyltransferase</fullName>
        <ecNumber evidence="1">2.7.7.8</ecNumber>
    </recommendedName>
    <alternativeName>
        <fullName evidence="1">Polynucleotide phosphorylase</fullName>
        <shortName evidence="1">PNPase</shortName>
    </alternativeName>
</protein>
<evidence type="ECO:0000255" key="1">
    <source>
        <dbReference type="HAMAP-Rule" id="MF_01595"/>
    </source>
</evidence>
<evidence type="ECO:0000256" key="2">
    <source>
        <dbReference type="SAM" id="MobiDB-lite"/>
    </source>
</evidence>
<keyword id="KW-0963">Cytoplasm</keyword>
<keyword id="KW-0460">Magnesium</keyword>
<keyword id="KW-0479">Metal-binding</keyword>
<keyword id="KW-0548">Nucleotidyltransferase</keyword>
<keyword id="KW-0694">RNA-binding</keyword>
<keyword id="KW-0808">Transferase</keyword>
<organism>
    <name type="scientific">Streptococcus pneumoniae serotype 19F (strain G54)</name>
    <dbReference type="NCBI Taxonomy" id="512566"/>
    <lineage>
        <taxon>Bacteria</taxon>
        <taxon>Bacillati</taxon>
        <taxon>Bacillota</taxon>
        <taxon>Bacilli</taxon>
        <taxon>Lactobacillales</taxon>
        <taxon>Streptococcaceae</taxon>
        <taxon>Streptococcus</taxon>
    </lineage>
</organism>